<reference key="1">
    <citation type="journal article" date="2011" name="PLoS Genet.">
        <title>Whole-genome comparison reveals novel genetic elements that characterize the genome of industrial strains of Saccharomyces cerevisiae.</title>
        <authorList>
            <person name="Borneman A.R."/>
            <person name="Desany B.A."/>
            <person name="Riches D."/>
            <person name="Affourtit J.P."/>
            <person name="Forgan A.H."/>
            <person name="Pretorius I.S."/>
            <person name="Egholm M."/>
            <person name="Chambers P.J."/>
        </authorList>
    </citation>
    <scope>NUCLEOTIDE SEQUENCE [LARGE SCALE GENOMIC DNA]</scope>
    <source>
        <strain>AWRI796</strain>
    </source>
</reference>
<sequence>MGFEWGFKPSSKITQSTVSSQGTGNVMIPTAGVKQKRRYANEEQEEEELPRNKNVMKYGGVSKRRPQPGSLIRGQPLPLQRGMELMNKNQLQQLLVDLMTKHPEIQQSVHTRVIGLDFSIQKCLDMLKQKSEAVYQSIPYNRSYESNKLDDYAFVRMKPQILEFLNCLVDFILDNIPPRLENLHASLKFLDICTELVIKLPRFELASNNYYYDKCIEQLSHVWCTLIEHVARDRIILLADNSSVWKSHMTRLQVYNEHSNGLLERPLQLFKSLDMGSPSAASSSTLSLQESIIYHHDTMTANENNNNSGSAATDSPFN</sequence>
<gene>
    <name type="primary">STS1</name>
    <name type="synonym">DBF8</name>
    <name type="synonym">SSM5</name>
    <name type="ORF">AWRI796_2424</name>
</gene>
<comment type="function">
    <text evidence="1">Involved in ubiquitin-mediated protein degradation. Regulatory factor in the ubiquitin/proteasome pathway that controls the turnover of proteasome substrates. Targets proteasomes to the nucleus and facilitates the degradation of nuclear proteins (By similarity).</text>
</comment>
<comment type="subunit">
    <text evidence="1">Binds the proteasome. Interacts with karyopherin SRP1 and Proteasome subunit RPN11.</text>
</comment>
<comment type="subcellular location">
    <subcellularLocation>
        <location evidence="1">Cytoplasm</location>
    </subcellularLocation>
    <subcellularLocation>
        <location evidence="1">Nucleus</location>
    </subcellularLocation>
</comment>
<comment type="similarity">
    <text evidence="3">Belongs to the cut8/STS1 family.</text>
</comment>
<keyword id="KW-0963">Cytoplasm</keyword>
<keyword id="KW-0539">Nucleus</keyword>
<keyword id="KW-0653">Protein transport</keyword>
<keyword id="KW-0813">Transport</keyword>
<organism>
    <name type="scientific">Saccharomyces cerevisiae (strain AWRI796)</name>
    <name type="common">Baker's yeast</name>
    <dbReference type="NCBI Taxonomy" id="764097"/>
    <lineage>
        <taxon>Eukaryota</taxon>
        <taxon>Fungi</taxon>
        <taxon>Dikarya</taxon>
        <taxon>Ascomycota</taxon>
        <taxon>Saccharomycotina</taxon>
        <taxon>Saccharomycetes</taxon>
        <taxon>Saccharomycetales</taxon>
        <taxon>Saccharomycetaceae</taxon>
        <taxon>Saccharomyces</taxon>
    </lineage>
</organism>
<feature type="chain" id="PRO_0000409440" description="Tethering factor for nuclear proteasome STS1">
    <location>
        <begin position="1"/>
        <end position="318"/>
    </location>
</feature>
<feature type="region of interest" description="Disordered" evidence="2">
    <location>
        <begin position="1"/>
        <end position="75"/>
    </location>
</feature>
<feature type="compositionally biased region" description="Polar residues" evidence="2">
    <location>
        <begin position="11"/>
        <end position="24"/>
    </location>
</feature>
<accession>E7KDX7</accession>
<evidence type="ECO:0000250" key="1"/>
<evidence type="ECO:0000256" key="2">
    <source>
        <dbReference type="SAM" id="MobiDB-lite"/>
    </source>
</evidence>
<evidence type="ECO:0000305" key="3"/>
<proteinExistence type="inferred from homology"/>
<name>STS1_YEASA</name>
<protein>
    <recommendedName>
        <fullName>Tethering factor for nuclear proteasome STS1</fullName>
    </recommendedName>
    <alternativeName>
        <fullName>Dumbbell former protein 8</fullName>
    </alternativeName>
    <alternativeName>
        <fullName>SEC23 suppressor 1</fullName>
    </alternativeName>
</protein>
<dbReference type="EMBL" id="ADVS01000031">
    <property type="protein sequence ID" value="EGA74477.1"/>
    <property type="molecule type" value="Genomic_DNA"/>
</dbReference>
<dbReference type="SMR" id="E7KDX7"/>
<dbReference type="HOGENOM" id="CLU_054606_1_0_1"/>
<dbReference type="OMA" id="DYTPHFL"/>
<dbReference type="OrthoDB" id="10061064at2759"/>
<dbReference type="GO" id="GO:0005737">
    <property type="term" value="C:cytoplasm"/>
    <property type="evidence" value="ECO:0007669"/>
    <property type="project" value="UniProtKB-SubCell"/>
</dbReference>
<dbReference type="GO" id="GO:0031965">
    <property type="term" value="C:nuclear membrane"/>
    <property type="evidence" value="ECO:0007669"/>
    <property type="project" value="TreeGrafter"/>
</dbReference>
<dbReference type="GO" id="GO:0070628">
    <property type="term" value="F:proteasome binding"/>
    <property type="evidence" value="ECO:0007669"/>
    <property type="project" value="TreeGrafter"/>
</dbReference>
<dbReference type="GO" id="GO:0071630">
    <property type="term" value="P:nuclear protein quality control by the ubiquitin-proteasome system"/>
    <property type="evidence" value="ECO:0007669"/>
    <property type="project" value="InterPro"/>
</dbReference>
<dbReference type="GO" id="GO:0031144">
    <property type="term" value="P:proteasome localization"/>
    <property type="evidence" value="ECO:0007669"/>
    <property type="project" value="InterPro"/>
</dbReference>
<dbReference type="GO" id="GO:0015031">
    <property type="term" value="P:protein transport"/>
    <property type="evidence" value="ECO:0007669"/>
    <property type="project" value="UniProtKB-KW"/>
</dbReference>
<dbReference type="FunFam" id="1.20.58.1590:FF:000003">
    <property type="entry name" value="Tethering factor for nuclear proteasome STS1"/>
    <property type="match status" value="1"/>
</dbReference>
<dbReference type="Gene3D" id="1.20.58.1590">
    <property type="entry name" value="Tethering factor for nuclear proteasome Cut8/Sts1"/>
    <property type="match status" value="1"/>
</dbReference>
<dbReference type="InterPro" id="IPR013868">
    <property type="entry name" value="Cut8/Sts1_fam"/>
</dbReference>
<dbReference type="InterPro" id="IPR038422">
    <property type="entry name" value="Cut8/Sts1_sf"/>
</dbReference>
<dbReference type="PANTHER" id="PTHR28032">
    <property type="entry name" value="FI02826P"/>
    <property type="match status" value="1"/>
</dbReference>
<dbReference type="PANTHER" id="PTHR28032:SF1">
    <property type="entry name" value="FI02826P"/>
    <property type="match status" value="1"/>
</dbReference>
<dbReference type="Pfam" id="PF08559">
    <property type="entry name" value="Cut8"/>
    <property type="match status" value="1"/>
</dbReference>